<protein>
    <recommendedName>
        <fullName evidence="6">L-fuculose phosphate aldolase</fullName>
        <ecNumber evidence="2 3 4 5">4.1.2.17</ecNumber>
    </recommendedName>
    <alternativeName>
        <fullName evidence="6">L-fuculose-1-phosphate aldolase</fullName>
    </alternativeName>
</protein>
<gene>
    <name type="primary">fucA</name>
    <name type="ordered locus">MJ1418</name>
</gene>
<dbReference type="EC" id="4.1.2.17" evidence="2 3 4 5"/>
<dbReference type="EMBL" id="L77117">
    <property type="protein sequence ID" value="AAB99428.1"/>
    <property type="molecule type" value="Genomic_DNA"/>
</dbReference>
<dbReference type="PIR" id="A64477">
    <property type="entry name" value="A64477"/>
</dbReference>
<dbReference type="RefSeq" id="WP_010870936.1">
    <property type="nucleotide sequence ID" value="NC_000909.1"/>
</dbReference>
<dbReference type="SMR" id="Q58813"/>
<dbReference type="FunCoup" id="Q58813">
    <property type="interactions" value="89"/>
</dbReference>
<dbReference type="STRING" id="243232.MJ_1418"/>
<dbReference type="PaxDb" id="243232-MJ_1418"/>
<dbReference type="EnsemblBacteria" id="AAB99428">
    <property type="protein sequence ID" value="AAB99428"/>
    <property type="gene ID" value="MJ_1418"/>
</dbReference>
<dbReference type="GeneID" id="1452322"/>
<dbReference type="KEGG" id="mja:MJ_1418"/>
<dbReference type="eggNOG" id="arCOG04226">
    <property type="taxonomic scope" value="Archaea"/>
</dbReference>
<dbReference type="HOGENOM" id="CLU_006033_3_1_2"/>
<dbReference type="InParanoid" id="Q58813"/>
<dbReference type="OrthoDB" id="18709at2157"/>
<dbReference type="PhylomeDB" id="Q58813"/>
<dbReference type="BioCyc" id="MetaCyc:MONOMER-12176"/>
<dbReference type="BRENDA" id="4.1.2.17">
    <property type="organism ID" value="3260"/>
</dbReference>
<dbReference type="UniPathway" id="UPA00071"/>
<dbReference type="Proteomes" id="UP000000805">
    <property type="component" value="Chromosome"/>
</dbReference>
<dbReference type="GO" id="GO:0005829">
    <property type="term" value="C:cytosol"/>
    <property type="evidence" value="ECO:0000318"/>
    <property type="project" value="GO_Central"/>
</dbReference>
<dbReference type="GO" id="GO:0016832">
    <property type="term" value="F:aldehyde-lyase activity"/>
    <property type="evidence" value="ECO:0000318"/>
    <property type="project" value="GO_Central"/>
</dbReference>
<dbReference type="GO" id="GO:0008738">
    <property type="term" value="F:L-fuculose-phosphate aldolase activity"/>
    <property type="evidence" value="ECO:0000314"/>
    <property type="project" value="UniProtKB"/>
</dbReference>
<dbReference type="GO" id="GO:0008270">
    <property type="term" value="F:zinc ion binding"/>
    <property type="evidence" value="ECO:0000250"/>
    <property type="project" value="UniProtKB"/>
</dbReference>
<dbReference type="GO" id="GO:0019323">
    <property type="term" value="P:pentose catabolic process"/>
    <property type="evidence" value="ECO:0000318"/>
    <property type="project" value="GO_Central"/>
</dbReference>
<dbReference type="FunFam" id="3.40.225.10:FF:000008">
    <property type="entry name" value="Sugar aldolase"/>
    <property type="match status" value="1"/>
</dbReference>
<dbReference type="Gene3D" id="3.40.225.10">
    <property type="entry name" value="Class II aldolase/adducin N-terminal domain"/>
    <property type="match status" value="1"/>
</dbReference>
<dbReference type="InterPro" id="IPR050197">
    <property type="entry name" value="Aldolase_class_II_sugar_metab"/>
</dbReference>
<dbReference type="InterPro" id="IPR001303">
    <property type="entry name" value="Aldolase_II/adducin_N"/>
</dbReference>
<dbReference type="InterPro" id="IPR036409">
    <property type="entry name" value="Aldolase_II/adducin_N_sf"/>
</dbReference>
<dbReference type="InterPro" id="IPR053406">
    <property type="entry name" value="Fuculose-P_aldolase"/>
</dbReference>
<dbReference type="NCBIfam" id="NF040649">
    <property type="entry name" value="FucA_Meth"/>
    <property type="match status" value="1"/>
</dbReference>
<dbReference type="PANTHER" id="PTHR22789:SF0">
    <property type="entry name" value="3-OXO-TETRONATE 4-PHOSPHATE DECARBOXYLASE-RELATED"/>
    <property type="match status" value="1"/>
</dbReference>
<dbReference type="PANTHER" id="PTHR22789">
    <property type="entry name" value="FUCULOSE PHOSPHATE ALDOLASE"/>
    <property type="match status" value="1"/>
</dbReference>
<dbReference type="Pfam" id="PF00596">
    <property type="entry name" value="Aldolase_II"/>
    <property type="match status" value="1"/>
</dbReference>
<dbReference type="SMART" id="SM01007">
    <property type="entry name" value="Aldolase_II"/>
    <property type="match status" value="1"/>
</dbReference>
<dbReference type="SUPFAM" id="SSF53639">
    <property type="entry name" value="AraD/HMP-PK domain-like"/>
    <property type="match status" value="1"/>
</dbReference>
<sequence length="181" mass="20470">MDKKQFIKICRKLYDRKYVVGSGGNVSVKEGDKIYLTPTGSILGFLKEDDIAEMDLDGNVIKGKPTSEKNLHLMIYRKRNDINAIIHTHSLISTFLSTINKEIELLTPEGKIFLKKIGYVDYYEAGSLKLAEETAKRDEDVIILKNHGVVCLGKDLIDAYIKVEVLEEQAKLTLLNLLVKK</sequence>
<keyword id="KW-0456">Lyase</keyword>
<keyword id="KW-0479">Metal-binding</keyword>
<keyword id="KW-1185">Reference proteome</keyword>
<keyword id="KW-0862">Zinc</keyword>
<feature type="chain" id="PRO_0000162932" description="L-fuculose phosphate aldolase">
    <location>
        <begin position="1"/>
        <end position="181"/>
    </location>
</feature>
<feature type="active site" description="Proton donor/acceptor" evidence="1">
    <location>
        <position position="68"/>
    </location>
</feature>
<feature type="binding site" evidence="1">
    <location>
        <begin position="24"/>
        <end position="25"/>
    </location>
    <ligand>
        <name>substrate</name>
    </ligand>
</feature>
<feature type="binding site" evidence="1">
    <location>
        <begin position="39"/>
        <end position="40"/>
    </location>
    <ligand>
        <name>substrate</name>
    </ligand>
</feature>
<feature type="binding site" evidence="1">
    <location>
        <begin position="66"/>
        <end position="67"/>
    </location>
    <ligand>
        <name>substrate</name>
    </ligand>
</feature>
<feature type="binding site" evidence="1">
    <location>
        <position position="68"/>
    </location>
    <ligand>
        <name>Zn(2+)</name>
        <dbReference type="ChEBI" id="CHEBI:29105"/>
        <note>catalytic</note>
    </ligand>
</feature>
<feature type="binding site" evidence="1">
    <location>
        <position position="87"/>
    </location>
    <ligand>
        <name>Zn(2+)</name>
        <dbReference type="ChEBI" id="CHEBI:29105"/>
        <note>catalytic</note>
    </ligand>
</feature>
<feature type="binding site" evidence="1">
    <location>
        <position position="89"/>
    </location>
    <ligand>
        <name>Zn(2+)</name>
        <dbReference type="ChEBI" id="CHEBI:29105"/>
        <note>catalytic</note>
    </ligand>
</feature>
<feature type="binding site" evidence="1">
    <location>
        <position position="147"/>
    </location>
    <ligand>
        <name>Zn(2+)</name>
        <dbReference type="ChEBI" id="CHEBI:29105"/>
        <note>catalytic</note>
    </ligand>
</feature>
<feature type="mutagenesis site" description="It shows a 3-fold increase of the affinity for dihydroxyacetone phosphate (DHAP) and a 3-fold decrease of the affinity for DL-glyceraldehyde compared to the wild-type." evidence="5">
    <original>N</original>
    <variation>L</variation>
    <location>
        <position position="25"/>
    </location>
</feature>
<feature type="mutagenesis site" description="It shows a 5-fold decrease of the affinity for dihydroxyacetone phosphate (DHAP), but has the same affinity for DL-glyceraldehyde compared to the wild-type." evidence="5">
    <original>N</original>
    <variation>T</variation>
    <location>
        <position position="25"/>
    </location>
</feature>
<organism>
    <name type="scientific">Methanocaldococcus jannaschii (strain ATCC 43067 / DSM 2661 / JAL-1 / JCM 10045 / NBRC 100440)</name>
    <name type="common">Methanococcus jannaschii</name>
    <dbReference type="NCBI Taxonomy" id="243232"/>
    <lineage>
        <taxon>Archaea</taxon>
        <taxon>Methanobacteriati</taxon>
        <taxon>Methanobacteriota</taxon>
        <taxon>Methanomada group</taxon>
        <taxon>Methanococci</taxon>
        <taxon>Methanococcales</taxon>
        <taxon>Methanocaldococcaceae</taxon>
        <taxon>Methanocaldococcus</taxon>
    </lineage>
</organism>
<name>FUCA_METJA</name>
<accession>Q58813</accession>
<comment type="function">
    <text evidence="2 3 4 5">Involved in the biosynthesis of the coenzyme F420 which requires phospholactate produced via the aldol cleavage of L-fuculose 1-phosphate and the NAD(+)-dependent oxidation of (S)-lactaldehyde (PubMed:16585745). Catalyzes the reversible cleavage of L-fuculose 1-phosphate (Fuc1P) to yield dihydroxyacetone phosphate (DHAP) and S-lactaldehyde (PubMed:16585745, PubMed:17927915, PubMed:22418259, Ref.2). FucA possesses a high specificity for the dihydroxyacetone phosphate (DHAP), but accepts a great variety of different aldehydes such as DL-glyceraldehyde and glycolaldehyde (PubMed:16585745, PubMed:17927915).</text>
</comment>
<comment type="catalytic activity">
    <reaction evidence="2 3 4 5">
        <text>L-fuculose 1-phosphate = (S)-lactaldehyde + dihydroxyacetone phosphate</text>
        <dbReference type="Rhea" id="RHEA:12933"/>
        <dbReference type="ChEBI" id="CHEBI:18041"/>
        <dbReference type="ChEBI" id="CHEBI:57642"/>
        <dbReference type="ChEBI" id="CHEBI:57846"/>
        <dbReference type="EC" id="4.1.2.17"/>
    </reaction>
</comment>
<comment type="cofactor">
    <cofactor evidence="5">
        <name>Zn(2+)</name>
        <dbReference type="ChEBI" id="CHEBI:29105"/>
    </cofactor>
    <text evidence="1">Binds 1 zinc ion per subunit.</text>
</comment>
<comment type="activity regulation">
    <text evidence="4">Trimethyl phosphonoacetate and DL-threose are competitive inhibitors with respect to dihydroxyacetone phosphate, and uncompetitive inhibitors with respect to DL-glyceraldehyde.</text>
</comment>
<comment type="biophysicochemical properties">
    <kinetics>
        <KM evidence="4">90 uM for dihydroxyacetone phosphate (DHAP)</KM>
        <KM evidence="4">743 uM for DL-glyceraldehyde</KM>
        <KM evidence="5">7.8 mM for DL-glyceraldehyde (DHAP)</KM>
        <KM evidence="5">1.01 mM for dihydroxyacetone phosphate (DHAP)</KM>
        <Vmax evidence="2">0.0256 umol/min/mg enzyme (in the direction of aldol condensation)</Vmax>
        <Vmax evidence="2">0.0133 umol/min/mg enzyme (in the direction of hydrolysis)</Vmax>
        <Vmax evidence="2">570.0 nmol/min/mg enzyme with DL-lactaldehyde as substrate (at pH 8 and at 70 degrees Celsius)</Vmax>
    </kinetics>
</comment>
<comment type="pathway">
    <text evidence="8">Cofactor biosynthesis; coenzyme F420 biosynthesis.</text>
</comment>
<comment type="subunit">
    <text evidence="2">Homotetramer.</text>
</comment>
<comment type="similarity">
    <text evidence="7">Belongs to the aldolase class II family. AraD/FucA subfamily.</text>
</comment>
<proteinExistence type="evidence at protein level"/>
<reference key="1">
    <citation type="journal article" date="1996" name="Science">
        <title>Complete genome sequence of the methanogenic archaeon, Methanococcus jannaschii.</title>
        <authorList>
            <person name="Bult C.J."/>
            <person name="White O."/>
            <person name="Olsen G.J."/>
            <person name="Zhou L."/>
            <person name="Fleischmann R.D."/>
            <person name="Sutton G.G."/>
            <person name="Blake J.A."/>
            <person name="FitzGerald L.M."/>
            <person name="Clayton R.A."/>
            <person name="Gocayne J.D."/>
            <person name="Kerlavage A.R."/>
            <person name="Dougherty B.A."/>
            <person name="Tomb J.-F."/>
            <person name="Adams M.D."/>
            <person name="Reich C.I."/>
            <person name="Overbeek R."/>
            <person name="Kirkness E.F."/>
            <person name="Weinstock K.G."/>
            <person name="Merrick J.M."/>
            <person name="Glodek A."/>
            <person name="Scott J.L."/>
            <person name="Geoghagen N.S.M."/>
            <person name="Weidman J.F."/>
            <person name="Fuhrmann J.L."/>
            <person name="Nguyen D."/>
            <person name="Utterback T.R."/>
            <person name="Kelley J.M."/>
            <person name="Peterson J.D."/>
            <person name="Sadow P.W."/>
            <person name="Hanna M.C."/>
            <person name="Cotton M.D."/>
            <person name="Roberts K.M."/>
            <person name="Hurst M.A."/>
            <person name="Kaine B.P."/>
            <person name="Borodovsky M."/>
            <person name="Klenk H.-P."/>
            <person name="Fraser C.M."/>
            <person name="Smith H.O."/>
            <person name="Woese C.R."/>
            <person name="Venter J.C."/>
        </authorList>
    </citation>
    <scope>NUCLEOTIDE SEQUENCE [LARGE SCALE GENOMIC DNA]</scope>
    <source>
        <strain>ATCC 43067 / DSM 2661 / JAL-1 / JCM 10045 / NBRC 100440</strain>
    </source>
</reference>
<reference key="2">
    <citation type="journal article" date="2001" name="J. Microbiol. Biotechnol.">
        <title>Mutagenic characterization of a conserved functional amino acid in fuculose-1-phosphate aldolase from Methanococcus jannaschii, a hyperthermophic archaea.</title>
        <authorList>
            <person name="Yoon H.-S."/>
            <person name="Kwon S.-J."/>
            <person name="Han M.-S."/>
            <person name="Yu Y.-G."/>
            <person name="Yoon M.-Y."/>
        </authorList>
    </citation>
    <scope>FUNCTION</scope>
    <scope>CATALYTIC ACTIVITY</scope>
    <scope>BIOPHYSICOCHEMICAL PROPERTIES</scope>
    <scope>MUTAGENESIS OF ASN-25</scope>
    <scope>COFACTOR</scope>
</reference>
<reference key="3">
    <citation type="journal article" date="2006" name="J. Bacteriol.">
        <title>Identification of lactaldehyde dehydrogenase in Methanocaldococcus jannaschii and its involvement in production of lactate for F420 biosynthesis.</title>
        <authorList>
            <person name="Grochowski L.L."/>
            <person name="Xu H."/>
            <person name="White R.H."/>
        </authorList>
    </citation>
    <scope>FUNCTION IN F420 BIOSYNTHESIS</scope>
    <scope>CATALYTIC ACTIVITY</scope>
    <scope>BIOPHYSICOCHEMICAL PROPERTIES</scope>
    <scope>PATHWAY</scope>
    <scope>SUBUNIT</scope>
</reference>
<reference key="4">
    <citation type="journal article" date="2007" name="J. Biochem. Mol. Biol.">
        <title>Characterization of aldolase from Methanococcus jannaschii by gas chromatography.</title>
        <authorList>
            <person name="Nam Shin J.E."/>
            <person name="Kim M.J."/>
            <person name="Choi J.A."/>
            <person name="Chun K.H."/>
        </authorList>
    </citation>
    <scope>FUNCTION</scope>
    <scope>CATALYTIC ACTIVITY</scope>
    <scope>SUBSTRATE SPECIFICITY</scope>
</reference>
<reference key="5">
    <citation type="journal article" date="2012" name="Enzyme Microb. Technol.">
        <title>Kinetic mechanism of fuculose-1-phosphate aldolase from the hyperthermophilic archaeon Methanococcus jannaschii.</title>
        <authorList>
            <person name="Park H.C."/>
            <person name="Park J.S."/>
            <person name="Choi J.D."/>
            <person name="Dabrowski M."/>
            <person name="Atkins W.M."/>
            <person name="Yoon M.Y."/>
        </authorList>
    </citation>
    <scope>FUNCTION</scope>
    <scope>CATALYTIC ACTIVITY</scope>
    <scope>BIOPHYSICOCHEMICAL PROPERTIES</scope>
    <scope>ACTIVITY REGULATION</scope>
</reference>
<evidence type="ECO:0000250" key="1">
    <source>
        <dbReference type="UniProtKB" id="P0AB87"/>
    </source>
</evidence>
<evidence type="ECO:0000269" key="2">
    <source>
    </source>
</evidence>
<evidence type="ECO:0000269" key="3">
    <source>
    </source>
</evidence>
<evidence type="ECO:0000269" key="4">
    <source>
    </source>
</evidence>
<evidence type="ECO:0000269" key="5">
    <source ref="2"/>
</evidence>
<evidence type="ECO:0000303" key="6">
    <source>
    </source>
</evidence>
<evidence type="ECO:0000305" key="7"/>
<evidence type="ECO:0000305" key="8">
    <source>
    </source>
</evidence>